<protein>
    <recommendedName>
        <fullName evidence="1">tRNA/tmRNA (uracil-C(5))-methyltransferase</fullName>
        <ecNumber evidence="1">2.1.1.-</ecNumber>
        <ecNumber evidence="1">2.1.1.35</ecNumber>
    </recommendedName>
    <alternativeName>
        <fullName evidence="1">tRNA (uracil(54)-C(5))-methyltransferase</fullName>
    </alternativeName>
    <alternativeName>
        <fullName evidence="1">tRNA(m5U54)-methyltransferase</fullName>
        <shortName evidence="1">RUMT</shortName>
    </alternativeName>
    <alternativeName>
        <fullName evidence="1">tmRNA (uracil(341)-C(5))-methyltransferase</fullName>
    </alternativeName>
</protein>
<keyword id="KW-0489">Methyltransferase</keyword>
<keyword id="KW-1185">Reference proteome</keyword>
<keyword id="KW-0949">S-adenosyl-L-methionine</keyword>
<keyword id="KW-0808">Transferase</keyword>
<keyword id="KW-0819">tRNA processing</keyword>
<gene>
    <name evidence="1" type="primary">trmA</name>
    <name type="ordered locus">azo1312</name>
</gene>
<reference key="1">
    <citation type="journal article" date="2006" name="Nat. Biotechnol.">
        <title>Complete genome of the mutualistic, N2-fixing grass endophyte Azoarcus sp. strain BH72.</title>
        <authorList>
            <person name="Krause A."/>
            <person name="Ramakumar A."/>
            <person name="Bartels D."/>
            <person name="Battistoni F."/>
            <person name="Bekel T."/>
            <person name="Boch J."/>
            <person name="Boehm M."/>
            <person name="Friedrich F."/>
            <person name="Hurek T."/>
            <person name="Krause L."/>
            <person name="Linke B."/>
            <person name="McHardy A.C."/>
            <person name="Sarkar A."/>
            <person name="Schneiker S."/>
            <person name="Syed A.A."/>
            <person name="Thauer R."/>
            <person name="Vorhoelter F.-J."/>
            <person name="Weidner S."/>
            <person name="Puehler A."/>
            <person name="Reinhold-Hurek B."/>
            <person name="Kaiser O."/>
            <person name="Goesmann A."/>
        </authorList>
    </citation>
    <scope>NUCLEOTIDE SEQUENCE [LARGE SCALE GENOMIC DNA]</scope>
    <source>
        <strain>BH72</strain>
    </source>
</reference>
<feature type="chain" id="PRO_0000388547" description="tRNA/tmRNA (uracil-C(5))-methyltransferase">
    <location>
        <begin position="1"/>
        <end position="364"/>
    </location>
</feature>
<feature type="active site" description="Nucleophile" evidence="1">
    <location>
        <position position="320"/>
    </location>
</feature>
<feature type="active site" description="Proton acceptor" evidence="1">
    <location>
        <position position="354"/>
    </location>
</feature>
<feature type="binding site" evidence="1">
    <location>
        <position position="186"/>
    </location>
    <ligand>
        <name>S-adenosyl-L-methionine</name>
        <dbReference type="ChEBI" id="CHEBI:59789"/>
    </ligand>
</feature>
<feature type="binding site" evidence="1">
    <location>
        <position position="214"/>
    </location>
    <ligand>
        <name>S-adenosyl-L-methionine</name>
        <dbReference type="ChEBI" id="CHEBI:59789"/>
    </ligand>
</feature>
<feature type="binding site" evidence="1">
    <location>
        <position position="219"/>
    </location>
    <ligand>
        <name>S-adenosyl-L-methionine</name>
        <dbReference type="ChEBI" id="CHEBI:59789"/>
    </ligand>
</feature>
<feature type="binding site" evidence="1">
    <location>
        <position position="235"/>
    </location>
    <ligand>
        <name>S-adenosyl-L-methionine</name>
        <dbReference type="ChEBI" id="CHEBI:59789"/>
    </ligand>
</feature>
<feature type="binding site" evidence="1">
    <location>
        <position position="295"/>
    </location>
    <ligand>
        <name>S-adenosyl-L-methionine</name>
        <dbReference type="ChEBI" id="CHEBI:59789"/>
    </ligand>
</feature>
<name>TRMA_AZOSB</name>
<sequence>MSLPRFDPAEYETQLAAKIARFKSDFAPLDLPEPEVFRSEPLHYRLRAEFRIWHSEGRLDYAMFDPADPKRPVLIDGFPAAAAPIAAAMPVLRERVMASEPLRRKLFQVEFLATLSGELMISLVYHRPLEADWEAAARELAAAMGVQLIGRSRKQKIVLERDWVLESFELDGRTLHYQQIEGSFSQPNGGVNRQMLVWARRQAEGSGADLLELYCGNGNFTVALAPLFGKVLATEMSKSSVRAAHYNLAANAVDNVTMVRMASEEISDALAGGRAYRRMQGIDLAGYRFGTLFVDPPRSGLDEATVALARRFDRILYISCNPQTLHDNIAALRDTHGIAAAAAFDQFPYTHHLECGVLLQKTAA</sequence>
<organism>
    <name type="scientific">Azoarcus sp. (strain BH72)</name>
    <dbReference type="NCBI Taxonomy" id="418699"/>
    <lineage>
        <taxon>Bacteria</taxon>
        <taxon>Pseudomonadati</taxon>
        <taxon>Pseudomonadota</taxon>
        <taxon>Betaproteobacteria</taxon>
        <taxon>Rhodocyclales</taxon>
        <taxon>Zoogloeaceae</taxon>
        <taxon>Azoarcus</taxon>
    </lineage>
</organism>
<evidence type="ECO:0000255" key="1">
    <source>
        <dbReference type="HAMAP-Rule" id="MF_01011"/>
    </source>
</evidence>
<accession>A1K524</accession>
<dbReference type="EC" id="2.1.1.-" evidence="1"/>
<dbReference type="EC" id="2.1.1.35" evidence="1"/>
<dbReference type="EMBL" id="AM406670">
    <property type="protein sequence ID" value="CAL93929.1"/>
    <property type="molecule type" value="Genomic_DNA"/>
</dbReference>
<dbReference type="RefSeq" id="WP_011765045.1">
    <property type="nucleotide sequence ID" value="NC_008702.1"/>
</dbReference>
<dbReference type="SMR" id="A1K524"/>
<dbReference type="STRING" id="62928.azo1312"/>
<dbReference type="KEGG" id="azo:azo1312"/>
<dbReference type="eggNOG" id="COG2265">
    <property type="taxonomic scope" value="Bacteria"/>
</dbReference>
<dbReference type="HOGENOM" id="CLU_043022_0_0_4"/>
<dbReference type="Proteomes" id="UP000002588">
    <property type="component" value="Chromosome"/>
</dbReference>
<dbReference type="GO" id="GO:0005829">
    <property type="term" value="C:cytosol"/>
    <property type="evidence" value="ECO:0007669"/>
    <property type="project" value="TreeGrafter"/>
</dbReference>
<dbReference type="GO" id="GO:0019843">
    <property type="term" value="F:rRNA binding"/>
    <property type="evidence" value="ECO:0007669"/>
    <property type="project" value="TreeGrafter"/>
</dbReference>
<dbReference type="GO" id="GO:0030697">
    <property type="term" value="F:tRNA (uracil(54)-C5)-methyltransferase activity, S-adenosyl methionine-dependent"/>
    <property type="evidence" value="ECO:0007669"/>
    <property type="project" value="UniProtKB-UniRule"/>
</dbReference>
<dbReference type="GO" id="GO:0000049">
    <property type="term" value="F:tRNA binding"/>
    <property type="evidence" value="ECO:0007669"/>
    <property type="project" value="TreeGrafter"/>
</dbReference>
<dbReference type="GO" id="GO:0030488">
    <property type="term" value="P:tRNA methylation"/>
    <property type="evidence" value="ECO:0007669"/>
    <property type="project" value="UniProtKB-UniRule"/>
</dbReference>
<dbReference type="CDD" id="cd02440">
    <property type="entry name" value="AdoMet_MTases"/>
    <property type="match status" value="1"/>
</dbReference>
<dbReference type="FunFam" id="2.40.50.1070:FF:000001">
    <property type="entry name" value="tRNA/tmRNA (uracil-C(5))-methyltransferase"/>
    <property type="match status" value="1"/>
</dbReference>
<dbReference type="FunFam" id="3.40.50.150:FF:000012">
    <property type="entry name" value="tRNA/tmRNA (uracil-C(5))-methyltransferase"/>
    <property type="match status" value="1"/>
</dbReference>
<dbReference type="Gene3D" id="2.40.50.1070">
    <property type="match status" value="1"/>
</dbReference>
<dbReference type="Gene3D" id="3.40.50.150">
    <property type="entry name" value="Vaccinia Virus protein VP39"/>
    <property type="match status" value="1"/>
</dbReference>
<dbReference type="HAMAP" id="MF_01011">
    <property type="entry name" value="RNA_methyltr_TrmA"/>
    <property type="match status" value="1"/>
</dbReference>
<dbReference type="InterPro" id="IPR030390">
    <property type="entry name" value="MeTrfase_TrmA_AS"/>
</dbReference>
<dbReference type="InterPro" id="IPR030391">
    <property type="entry name" value="MeTrfase_TrmA_CS"/>
</dbReference>
<dbReference type="InterPro" id="IPR029063">
    <property type="entry name" value="SAM-dependent_MTases_sf"/>
</dbReference>
<dbReference type="InterPro" id="IPR011869">
    <property type="entry name" value="TrmA_MeTrfase"/>
</dbReference>
<dbReference type="InterPro" id="IPR010280">
    <property type="entry name" value="U5_MeTrfase_fam"/>
</dbReference>
<dbReference type="NCBIfam" id="TIGR02143">
    <property type="entry name" value="trmA_only"/>
    <property type="match status" value="1"/>
</dbReference>
<dbReference type="PANTHER" id="PTHR47790">
    <property type="entry name" value="TRNA/TMRNA (URACIL-C(5))-METHYLTRANSFERASE"/>
    <property type="match status" value="1"/>
</dbReference>
<dbReference type="PANTHER" id="PTHR47790:SF2">
    <property type="entry name" value="TRNA_TMRNA (URACIL-C(5))-METHYLTRANSFERASE"/>
    <property type="match status" value="1"/>
</dbReference>
<dbReference type="Pfam" id="PF05958">
    <property type="entry name" value="tRNA_U5-meth_tr"/>
    <property type="match status" value="1"/>
</dbReference>
<dbReference type="SUPFAM" id="SSF53335">
    <property type="entry name" value="S-adenosyl-L-methionine-dependent methyltransferases"/>
    <property type="match status" value="1"/>
</dbReference>
<dbReference type="PROSITE" id="PS51687">
    <property type="entry name" value="SAM_MT_RNA_M5U"/>
    <property type="match status" value="1"/>
</dbReference>
<dbReference type="PROSITE" id="PS01230">
    <property type="entry name" value="TRMA_1"/>
    <property type="match status" value="1"/>
</dbReference>
<dbReference type="PROSITE" id="PS01231">
    <property type="entry name" value="TRMA_2"/>
    <property type="match status" value="1"/>
</dbReference>
<comment type="function">
    <text evidence="1">Dual-specificity methyltransferase that catalyzes the formation of 5-methyluridine at position 54 (m5U54) in all tRNAs, and that of position 341 (m5U341) in tmRNA (transfer-mRNA).</text>
</comment>
<comment type="catalytic activity">
    <reaction evidence="1">
        <text>uridine(54) in tRNA + S-adenosyl-L-methionine = 5-methyluridine(54) in tRNA + S-adenosyl-L-homocysteine + H(+)</text>
        <dbReference type="Rhea" id="RHEA:42712"/>
        <dbReference type="Rhea" id="RHEA-COMP:10167"/>
        <dbReference type="Rhea" id="RHEA-COMP:10193"/>
        <dbReference type="ChEBI" id="CHEBI:15378"/>
        <dbReference type="ChEBI" id="CHEBI:57856"/>
        <dbReference type="ChEBI" id="CHEBI:59789"/>
        <dbReference type="ChEBI" id="CHEBI:65315"/>
        <dbReference type="ChEBI" id="CHEBI:74447"/>
        <dbReference type="EC" id="2.1.1.35"/>
    </reaction>
</comment>
<comment type="catalytic activity">
    <reaction evidence="1">
        <text>uridine(341) in tmRNA + S-adenosyl-L-methionine = 5-methyluridine(341) in tmRNA + S-adenosyl-L-homocysteine + H(+)</text>
        <dbReference type="Rhea" id="RHEA:43612"/>
        <dbReference type="Rhea" id="RHEA-COMP:10630"/>
        <dbReference type="Rhea" id="RHEA-COMP:10631"/>
        <dbReference type="ChEBI" id="CHEBI:15378"/>
        <dbReference type="ChEBI" id="CHEBI:57856"/>
        <dbReference type="ChEBI" id="CHEBI:59789"/>
        <dbReference type="ChEBI" id="CHEBI:65315"/>
        <dbReference type="ChEBI" id="CHEBI:74447"/>
    </reaction>
</comment>
<comment type="similarity">
    <text evidence="1">Belongs to the class I-like SAM-binding methyltransferase superfamily. RNA M5U methyltransferase family. TrmA subfamily.</text>
</comment>
<proteinExistence type="inferred from homology"/>